<gene>
    <name evidence="1" type="primary">htpG</name>
    <name type="ordered locus">HI_0104</name>
</gene>
<name>HTPG_HAEIN</name>
<reference key="1">
    <citation type="journal article" date="1995" name="Science">
        <title>Whole-genome random sequencing and assembly of Haemophilus influenzae Rd.</title>
        <authorList>
            <person name="Fleischmann R.D."/>
            <person name="Adams M.D."/>
            <person name="White O."/>
            <person name="Clayton R.A."/>
            <person name="Kirkness E.F."/>
            <person name="Kerlavage A.R."/>
            <person name="Bult C.J."/>
            <person name="Tomb J.-F."/>
            <person name="Dougherty B.A."/>
            <person name="Merrick J.M."/>
            <person name="McKenney K."/>
            <person name="Sutton G.G."/>
            <person name="FitzHugh W."/>
            <person name="Fields C.A."/>
            <person name="Gocayne J.D."/>
            <person name="Scott J.D."/>
            <person name="Shirley R."/>
            <person name="Liu L.-I."/>
            <person name="Glodek A."/>
            <person name="Kelley J.M."/>
            <person name="Weidman J.F."/>
            <person name="Phillips C.A."/>
            <person name="Spriggs T."/>
            <person name="Hedblom E."/>
            <person name="Cotton M.D."/>
            <person name="Utterback T.R."/>
            <person name="Hanna M.C."/>
            <person name="Nguyen D.T."/>
            <person name="Saudek D.M."/>
            <person name="Brandon R.C."/>
            <person name="Fine L.D."/>
            <person name="Fritchman J.L."/>
            <person name="Fuhrmann J.L."/>
            <person name="Geoghagen N.S.M."/>
            <person name="Gnehm C.L."/>
            <person name="McDonald L.A."/>
            <person name="Small K.V."/>
            <person name="Fraser C.M."/>
            <person name="Smith H.O."/>
            <person name="Venter J.C."/>
        </authorList>
    </citation>
    <scope>NUCLEOTIDE SEQUENCE [LARGE SCALE GENOMIC DNA]</scope>
    <source>
        <strain>ATCC 51907 / DSM 11121 / KW20 / Rd</strain>
    </source>
</reference>
<proteinExistence type="inferred from homology"/>
<accession>P44516</accession>
<comment type="function">
    <text evidence="1">Molecular chaperone. Has ATPase activity.</text>
</comment>
<comment type="subunit">
    <text evidence="1">Homodimer.</text>
</comment>
<comment type="subcellular location">
    <subcellularLocation>
        <location evidence="1">Cytoplasm</location>
    </subcellularLocation>
</comment>
<comment type="similarity">
    <text evidence="1">Belongs to the heat shock protein 90 family.</text>
</comment>
<comment type="sequence caution" evidence="2">
    <conflict type="erroneous initiation">
        <sequence resource="EMBL-CDS" id="AAC21778"/>
    </conflict>
</comment>
<organism>
    <name type="scientific">Haemophilus influenzae (strain ATCC 51907 / DSM 11121 / KW20 / Rd)</name>
    <dbReference type="NCBI Taxonomy" id="71421"/>
    <lineage>
        <taxon>Bacteria</taxon>
        <taxon>Pseudomonadati</taxon>
        <taxon>Pseudomonadota</taxon>
        <taxon>Gammaproteobacteria</taxon>
        <taxon>Pasteurellales</taxon>
        <taxon>Pasteurellaceae</taxon>
        <taxon>Haemophilus</taxon>
    </lineage>
</organism>
<dbReference type="EMBL" id="L42023">
    <property type="protein sequence ID" value="AAC21778.1"/>
    <property type="status" value="ALT_INIT"/>
    <property type="molecule type" value="Genomic_DNA"/>
</dbReference>
<dbReference type="RefSeq" id="NP_438278.1">
    <property type="nucleotide sequence ID" value="NC_000907.1"/>
</dbReference>
<dbReference type="SMR" id="P44516"/>
<dbReference type="STRING" id="71421.HI_0104"/>
<dbReference type="EnsemblBacteria" id="AAC21778">
    <property type="protein sequence ID" value="AAC21778"/>
    <property type="gene ID" value="HI_0104"/>
</dbReference>
<dbReference type="KEGG" id="hin:HI_0104"/>
<dbReference type="PATRIC" id="fig|71421.8.peg.107"/>
<dbReference type="eggNOG" id="COG0326">
    <property type="taxonomic scope" value="Bacteria"/>
</dbReference>
<dbReference type="HOGENOM" id="CLU_006684_3_0_6"/>
<dbReference type="OrthoDB" id="9802640at2"/>
<dbReference type="PhylomeDB" id="P44516"/>
<dbReference type="Proteomes" id="UP000000579">
    <property type="component" value="Chromosome"/>
</dbReference>
<dbReference type="GO" id="GO:0005829">
    <property type="term" value="C:cytosol"/>
    <property type="evidence" value="ECO:0000318"/>
    <property type="project" value="GO_Central"/>
</dbReference>
<dbReference type="GO" id="GO:0005524">
    <property type="term" value="F:ATP binding"/>
    <property type="evidence" value="ECO:0000318"/>
    <property type="project" value="GO_Central"/>
</dbReference>
<dbReference type="GO" id="GO:0016887">
    <property type="term" value="F:ATP hydrolysis activity"/>
    <property type="evidence" value="ECO:0000318"/>
    <property type="project" value="GO_Central"/>
</dbReference>
<dbReference type="GO" id="GO:0140662">
    <property type="term" value="F:ATP-dependent protein folding chaperone"/>
    <property type="evidence" value="ECO:0007669"/>
    <property type="project" value="InterPro"/>
</dbReference>
<dbReference type="GO" id="GO:0051082">
    <property type="term" value="F:unfolded protein binding"/>
    <property type="evidence" value="ECO:0000318"/>
    <property type="project" value="GO_Central"/>
</dbReference>
<dbReference type="GO" id="GO:0006974">
    <property type="term" value="P:DNA damage response"/>
    <property type="evidence" value="ECO:0000318"/>
    <property type="project" value="GO_Central"/>
</dbReference>
<dbReference type="GO" id="GO:0006457">
    <property type="term" value="P:protein folding"/>
    <property type="evidence" value="ECO:0000318"/>
    <property type="project" value="GO_Central"/>
</dbReference>
<dbReference type="GO" id="GO:0009408">
    <property type="term" value="P:response to heat"/>
    <property type="evidence" value="ECO:0000318"/>
    <property type="project" value="GO_Central"/>
</dbReference>
<dbReference type="CDD" id="cd16927">
    <property type="entry name" value="HATPase_Hsp90-like"/>
    <property type="match status" value="1"/>
</dbReference>
<dbReference type="FunFam" id="1.20.120.790:FF:000002">
    <property type="entry name" value="Molecular chaperone HtpG"/>
    <property type="match status" value="1"/>
</dbReference>
<dbReference type="FunFam" id="3.30.230.80:FF:000002">
    <property type="entry name" value="Molecular chaperone HtpG"/>
    <property type="match status" value="1"/>
</dbReference>
<dbReference type="FunFam" id="3.30.565.10:FF:000009">
    <property type="entry name" value="Molecular chaperone HtpG"/>
    <property type="match status" value="1"/>
</dbReference>
<dbReference type="FunFam" id="3.40.50.11260:FF:000002">
    <property type="entry name" value="Molecular chaperone HtpG"/>
    <property type="match status" value="1"/>
</dbReference>
<dbReference type="Gene3D" id="3.30.230.80">
    <property type="match status" value="1"/>
</dbReference>
<dbReference type="Gene3D" id="3.40.50.11260">
    <property type="match status" value="1"/>
</dbReference>
<dbReference type="Gene3D" id="1.20.120.790">
    <property type="entry name" value="Heat shock protein 90, C-terminal domain"/>
    <property type="match status" value="1"/>
</dbReference>
<dbReference type="Gene3D" id="3.30.565.10">
    <property type="entry name" value="Histidine kinase-like ATPase, C-terminal domain"/>
    <property type="match status" value="1"/>
</dbReference>
<dbReference type="HAMAP" id="MF_00505">
    <property type="entry name" value="HSP90"/>
    <property type="match status" value="1"/>
</dbReference>
<dbReference type="InterPro" id="IPR036890">
    <property type="entry name" value="HATPase_C_sf"/>
</dbReference>
<dbReference type="InterPro" id="IPR019805">
    <property type="entry name" value="Heat_shock_protein_90_CS"/>
</dbReference>
<dbReference type="InterPro" id="IPR037196">
    <property type="entry name" value="HSP90_C"/>
</dbReference>
<dbReference type="InterPro" id="IPR001404">
    <property type="entry name" value="Hsp90_fam"/>
</dbReference>
<dbReference type="InterPro" id="IPR020575">
    <property type="entry name" value="Hsp90_N"/>
</dbReference>
<dbReference type="InterPro" id="IPR020568">
    <property type="entry name" value="Ribosomal_Su5_D2-typ_SF"/>
</dbReference>
<dbReference type="NCBIfam" id="NF003555">
    <property type="entry name" value="PRK05218.1"/>
    <property type="match status" value="1"/>
</dbReference>
<dbReference type="PANTHER" id="PTHR11528">
    <property type="entry name" value="HEAT SHOCK PROTEIN 90 FAMILY MEMBER"/>
    <property type="match status" value="1"/>
</dbReference>
<dbReference type="Pfam" id="PF13589">
    <property type="entry name" value="HATPase_c_3"/>
    <property type="match status" value="1"/>
</dbReference>
<dbReference type="Pfam" id="PF00183">
    <property type="entry name" value="HSP90"/>
    <property type="match status" value="1"/>
</dbReference>
<dbReference type="PIRSF" id="PIRSF002583">
    <property type="entry name" value="Hsp90"/>
    <property type="match status" value="1"/>
</dbReference>
<dbReference type="PRINTS" id="PR00775">
    <property type="entry name" value="HEATSHOCK90"/>
</dbReference>
<dbReference type="SMART" id="SM00387">
    <property type="entry name" value="HATPase_c"/>
    <property type="match status" value="1"/>
</dbReference>
<dbReference type="SUPFAM" id="SSF55874">
    <property type="entry name" value="ATPase domain of HSP90 chaperone/DNA topoisomerase II/histidine kinase"/>
    <property type="match status" value="1"/>
</dbReference>
<dbReference type="SUPFAM" id="SSF110942">
    <property type="entry name" value="HSP90 C-terminal domain"/>
    <property type="match status" value="1"/>
</dbReference>
<dbReference type="SUPFAM" id="SSF54211">
    <property type="entry name" value="Ribosomal protein S5 domain 2-like"/>
    <property type="match status" value="1"/>
</dbReference>
<dbReference type="PROSITE" id="PS00298">
    <property type="entry name" value="HSP90"/>
    <property type="match status" value="1"/>
</dbReference>
<feature type="chain" id="PRO_0000062990" description="Chaperone protein HtpG">
    <location>
        <begin position="1"/>
        <end position="626"/>
    </location>
</feature>
<feature type="region of interest" description="A; substrate-binding" evidence="1">
    <location>
        <begin position="1"/>
        <end position="339"/>
    </location>
</feature>
<feature type="region of interest" description="B" evidence="1">
    <location>
        <begin position="340"/>
        <end position="555"/>
    </location>
</feature>
<feature type="region of interest" description="C" evidence="1">
    <location>
        <begin position="556"/>
        <end position="626"/>
    </location>
</feature>
<sequence>MSQNQETRGFQSEVKQLLQLMIHSLYSNKEIFLRELISNASDAADKLRFKALSNPALYEGDGDLRVRVSFDADKGTITISDNGIGMTREQVIDHLGTIAKSGTKEFLTALGQDQAKNSQLIGQFGVGFYSAFIVADKVTVKTRAAGEEADKAVLWESAGEGEYSVADIEKKSRGTDVILHLREDEKEFLNEWRLREIIGKYSDHIGLPVEMLTKEYDDEGKECGEKWEKINKSDALWTRSKNDVSDEEYKAFYKHLSHDFVDPVTWAHNKVEGNQAYTSLLYVPAKAPWDLFNREHKHGLKLYVQRVFIMDDAEQFIPNYLRFMRGLIDSNDLPLNVSREILQDNKITAALRKALTKRSLQMLEKLAKDDAEKYLQFWKEFGLVLKEGPAEDFANKETVAKLLRFASTHNDGSEQTVSLEDYILRMKEGQKAIYYITADSYVAAKNSPHLELFNKKGIEVLLLSDRIDEWMLSYLTEFDGKQLQSITKADLDLGDLADKESETQKQQDEAFGSFIERVKNLLGERVKTVRLTHNLTDTPAVVSTDNDQMTTQMAKLFAAAGQPVPEVKYTFELNPEHHLVKKVADIADETEFADWVELLLEQAMLAERGSLENPAAFIKRINKLLG</sequence>
<evidence type="ECO:0000255" key="1">
    <source>
        <dbReference type="HAMAP-Rule" id="MF_00505"/>
    </source>
</evidence>
<evidence type="ECO:0000305" key="2"/>
<protein>
    <recommendedName>
        <fullName evidence="1">Chaperone protein HtpG</fullName>
    </recommendedName>
    <alternativeName>
        <fullName evidence="1">Heat shock protein HtpG</fullName>
    </alternativeName>
    <alternativeName>
        <fullName evidence="1">High temperature protein G</fullName>
    </alternativeName>
</protein>
<keyword id="KW-0067">ATP-binding</keyword>
<keyword id="KW-0143">Chaperone</keyword>
<keyword id="KW-0963">Cytoplasm</keyword>
<keyword id="KW-0547">Nucleotide-binding</keyword>
<keyword id="KW-1185">Reference proteome</keyword>
<keyword id="KW-0346">Stress response</keyword>